<comment type="function">
    <text evidence="4 5">Snake venom phospholipase A2 (PLA2) that causes myonecrosis when injected intramuscularly, shows indirect hemolytic activity, abolishes twitches evoked by indirect stimulation earlier than those by direct stimulation (in the mouse phrenic nerve-diaphragm preparation) but does not produce complete neuromuscular block (up to 30 ug/ml) (in the chick biventer cervicis nerve-muscle preparation) (PubMed:3615669). PLA2 catalyzes the calcium-dependent hydrolysis of the 2-acyl groups in 3-sn-phosphoglycerides.</text>
</comment>
<comment type="catalytic activity">
    <reaction evidence="2 3">
        <text>a 1,2-diacyl-sn-glycero-3-phosphocholine + H2O = a 1-acyl-sn-glycero-3-phosphocholine + a fatty acid + H(+)</text>
        <dbReference type="Rhea" id="RHEA:15801"/>
        <dbReference type="ChEBI" id="CHEBI:15377"/>
        <dbReference type="ChEBI" id="CHEBI:15378"/>
        <dbReference type="ChEBI" id="CHEBI:28868"/>
        <dbReference type="ChEBI" id="CHEBI:57643"/>
        <dbReference type="ChEBI" id="CHEBI:58168"/>
        <dbReference type="EC" id="3.1.1.4"/>
    </reaction>
</comment>
<comment type="cofactor">
    <cofactor evidence="1">
        <name>Ca(2+)</name>
        <dbReference type="ChEBI" id="CHEBI:29108"/>
    </cofactor>
    <text evidence="1">Binds 1 Ca(2+) ion.</text>
</comment>
<comment type="subcellular location">
    <subcellularLocation>
        <location>Secreted</location>
    </subcellularLocation>
</comment>
<comment type="tissue specificity">
    <text>Expressed by the venom gland.</text>
</comment>
<comment type="miscellaneous">
    <text evidence="7">Negative results: does not have anticoagulant activity.</text>
</comment>
<comment type="similarity">
    <text evidence="6">Belongs to the phospholipase A2 family. Group I subfamily. D49 sub-subfamily.</text>
</comment>
<proteinExistence type="evidence at protein level"/>
<name>PA2A1_NAJMO</name>
<keyword id="KW-0106">Calcium</keyword>
<keyword id="KW-0903">Direct protein sequencing</keyword>
<keyword id="KW-1015">Disulfide bond</keyword>
<keyword id="KW-0378">Hydrolase</keyword>
<keyword id="KW-0442">Lipid degradation</keyword>
<keyword id="KW-0443">Lipid metabolism</keyword>
<keyword id="KW-0479">Metal-binding</keyword>
<keyword id="KW-0959">Myotoxin</keyword>
<keyword id="KW-0528">Neurotoxin</keyword>
<keyword id="KW-0964">Secreted</keyword>
<keyword id="KW-0800">Toxin</keyword>
<evidence type="ECO:0000250" key="1"/>
<evidence type="ECO:0000255" key="2">
    <source>
        <dbReference type="PROSITE-ProRule" id="PRU10035"/>
    </source>
</evidence>
<evidence type="ECO:0000255" key="3">
    <source>
        <dbReference type="PROSITE-ProRule" id="PRU10036"/>
    </source>
</evidence>
<evidence type="ECO:0000269" key="4">
    <source>
    </source>
</evidence>
<evidence type="ECO:0000269" key="5">
    <source>
    </source>
</evidence>
<evidence type="ECO:0000305" key="6"/>
<evidence type="ECO:0000305" key="7">
    <source>
    </source>
</evidence>
<protein>
    <recommendedName>
        <fullName>Acidic phospholipase A2 CM-I</fullName>
        <shortName>svPLA2</shortName>
        <ecNumber>3.1.1.4</ecNumber>
    </recommendedName>
    <alternativeName>
        <fullName>Phosphatidylcholine 2-acylhydrolase</fullName>
    </alternativeName>
</protein>
<accession>P00602</accession>
<sequence length="118" mass="13219">NLYQFKNMIHCTVPSRPWWHFADYGCYCGRGGKGTAVDDLDRCCQVHDNCYGEAEKLGCWPYLTLYKYECSQGKLTCSGGNNKCEAAVCNCDLVAANCFAGAPYIDANYNVNLKERCQ</sequence>
<organism>
    <name type="scientific">Naja mossambica</name>
    <name type="common">Mozambique spitting cobra</name>
    <dbReference type="NCBI Taxonomy" id="8644"/>
    <lineage>
        <taxon>Eukaryota</taxon>
        <taxon>Metazoa</taxon>
        <taxon>Chordata</taxon>
        <taxon>Craniata</taxon>
        <taxon>Vertebrata</taxon>
        <taxon>Euteleostomi</taxon>
        <taxon>Lepidosauria</taxon>
        <taxon>Squamata</taxon>
        <taxon>Bifurcata</taxon>
        <taxon>Unidentata</taxon>
        <taxon>Episquamata</taxon>
        <taxon>Toxicofera</taxon>
        <taxon>Serpentes</taxon>
        <taxon>Colubroidea</taxon>
        <taxon>Elapidae</taxon>
        <taxon>Elapinae</taxon>
        <taxon>Naja</taxon>
    </lineage>
</organism>
<reference key="1">
    <citation type="journal article" date="1977" name="Biochim. Biophys. Acta">
        <title>Naja mossambica mossambica venom. Purification, some properties and the amino acid sequences of three phospholipases A (CM-I, CM-II and CM-III).</title>
        <authorList>
            <person name="Joubert F.J."/>
        </authorList>
    </citation>
    <scope>PROTEIN SEQUENCE</scope>
    <source>
        <tissue>Venom</tissue>
    </source>
</reference>
<reference key="2">
    <citation type="journal article" date="1987" name="Proc. Natl. Sci. Counc. Repub. China, B, Life Sci.">
        <title>Pharmacological study on phospholipases A2 isolated from Naja mossambica mossambica venom.</title>
        <authorList>
            <person name="Lin W.W."/>
            <person name="Chang P.L."/>
            <person name="Lee C.Y."/>
            <person name="Joubert F.J."/>
        </authorList>
    </citation>
    <scope>FUNCTION</scope>
</reference>
<reference key="3">
    <citation type="journal article" date="1987" name="J. Biol. Chem.">
        <title>Structure-function relationships of phospholipases. The anticoagulant region of phospholipases A2.</title>
        <authorList>
            <person name="Kini R.M."/>
            <person name="Evans H.J."/>
        </authorList>
    </citation>
    <scope>FUNCTION</scope>
</reference>
<feature type="chain" id="PRO_0000161666" description="Acidic phospholipase A2 CM-I">
    <location>
        <begin position="1"/>
        <end position="118"/>
    </location>
</feature>
<feature type="active site" evidence="1">
    <location>
        <position position="47"/>
    </location>
</feature>
<feature type="active site" evidence="1">
    <location>
        <position position="92"/>
    </location>
</feature>
<feature type="binding site" evidence="1">
    <location>
        <position position="27"/>
    </location>
    <ligand>
        <name>Ca(2+)</name>
        <dbReference type="ChEBI" id="CHEBI:29108"/>
    </ligand>
</feature>
<feature type="binding site" evidence="1">
    <location>
        <position position="29"/>
    </location>
    <ligand>
        <name>Ca(2+)</name>
        <dbReference type="ChEBI" id="CHEBI:29108"/>
    </ligand>
</feature>
<feature type="binding site" evidence="1">
    <location>
        <position position="31"/>
    </location>
    <ligand>
        <name>Ca(2+)</name>
        <dbReference type="ChEBI" id="CHEBI:29108"/>
    </ligand>
</feature>
<feature type="binding site" evidence="1">
    <location>
        <position position="48"/>
    </location>
    <ligand>
        <name>Ca(2+)</name>
        <dbReference type="ChEBI" id="CHEBI:29108"/>
    </ligand>
</feature>
<feature type="disulfide bond" evidence="1">
    <location>
        <begin position="11"/>
        <end position="70"/>
    </location>
</feature>
<feature type="disulfide bond" evidence="1">
    <location>
        <begin position="26"/>
        <end position="117"/>
    </location>
</feature>
<feature type="disulfide bond" evidence="1">
    <location>
        <begin position="28"/>
        <end position="44"/>
    </location>
</feature>
<feature type="disulfide bond" evidence="1">
    <location>
        <begin position="43"/>
        <end position="98"/>
    </location>
</feature>
<feature type="disulfide bond" evidence="1">
    <location>
        <begin position="50"/>
        <end position="91"/>
    </location>
</feature>
<feature type="disulfide bond" evidence="1">
    <location>
        <begin position="59"/>
        <end position="84"/>
    </location>
</feature>
<feature type="disulfide bond" evidence="1">
    <location>
        <begin position="77"/>
        <end position="89"/>
    </location>
</feature>
<dbReference type="EC" id="3.1.1.4"/>
<dbReference type="PIR" id="A00743">
    <property type="entry name" value="PSNJ1M"/>
</dbReference>
<dbReference type="SMR" id="P00602"/>
<dbReference type="BindingDB" id="P00602"/>
<dbReference type="ChEMBL" id="CHEMBL3968"/>
<dbReference type="GO" id="GO:0005576">
    <property type="term" value="C:extracellular region"/>
    <property type="evidence" value="ECO:0007669"/>
    <property type="project" value="UniProtKB-SubCell"/>
</dbReference>
<dbReference type="GO" id="GO:0005509">
    <property type="term" value="F:calcium ion binding"/>
    <property type="evidence" value="ECO:0007669"/>
    <property type="project" value="InterPro"/>
</dbReference>
<dbReference type="GO" id="GO:0047498">
    <property type="term" value="F:calcium-dependent phospholipase A2 activity"/>
    <property type="evidence" value="ECO:0007669"/>
    <property type="project" value="TreeGrafter"/>
</dbReference>
<dbReference type="GO" id="GO:0005543">
    <property type="term" value="F:phospholipid binding"/>
    <property type="evidence" value="ECO:0007669"/>
    <property type="project" value="TreeGrafter"/>
</dbReference>
<dbReference type="GO" id="GO:0090729">
    <property type="term" value="F:toxin activity"/>
    <property type="evidence" value="ECO:0007669"/>
    <property type="project" value="UniProtKB-KW"/>
</dbReference>
<dbReference type="GO" id="GO:0050482">
    <property type="term" value="P:arachidonate secretion"/>
    <property type="evidence" value="ECO:0007669"/>
    <property type="project" value="InterPro"/>
</dbReference>
<dbReference type="GO" id="GO:0016042">
    <property type="term" value="P:lipid catabolic process"/>
    <property type="evidence" value="ECO:0007669"/>
    <property type="project" value="UniProtKB-KW"/>
</dbReference>
<dbReference type="GO" id="GO:0006644">
    <property type="term" value="P:phospholipid metabolic process"/>
    <property type="evidence" value="ECO:0007669"/>
    <property type="project" value="InterPro"/>
</dbReference>
<dbReference type="CDD" id="cd00125">
    <property type="entry name" value="PLA2c"/>
    <property type="match status" value="1"/>
</dbReference>
<dbReference type="FunFam" id="1.20.90.10:FF:000007">
    <property type="entry name" value="Acidic phospholipase A2"/>
    <property type="match status" value="1"/>
</dbReference>
<dbReference type="Gene3D" id="1.20.90.10">
    <property type="entry name" value="Phospholipase A2 domain"/>
    <property type="match status" value="1"/>
</dbReference>
<dbReference type="InterPro" id="IPR001211">
    <property type="entry name" value="PLipase_A2"/>
</dbReference>
<dbReference type="InterPro" id="IPR033112">
    <property type="entry name" value="PLipase_A2_Asp_AS"/>
</dbReference>
<dbReference type="InterPro" id="IPR016090">
    <property type="entry name" value="PLipase_A2_dom"/>
</dbReference>
<dbReference type="InterPro" id="IPR036444">
    <property type="entry name" value="PLipase_A2_dom_sf"/>
</dbReference>
<dbReference type="InterPro" id="IPR033113">
    <property type="entry name" value="PLipase_A2_His_AS"/>
</dbReference>
<dbReference type="PANTHER" id="PTHR11716:SF51">
    <property type="entry name" value="PHOSPHOLIPASE A2"/>
    <property type="match status" value="1"/>
</dbReference>
<dbReference type="PANTHER" id="PTHR11716">
    <property type="entry name" value="PHOSPHOLIPASE A2 FAMILY MEMBER"/>
    <property type="match status" value="1"/>
</dbReference>
<dbReference type="Pfam" id="PF00068">
    <property type="entry name" value="Phospholip_A2_1"/>
    <property type="match status" value="1"/>
</dbReference>
<dbReference type="PRINTS" id="PR00389">
    <property type="entry name" value="PHPHLIPASEA2"/>
</dbReference>
<dbReference type="SMART" id="SM00085">
    <property type="entry name" value="PA2c"/>
    <property type="match status" value="1"/>
</dbReference>
<dbReference type="SUPFAM" id="SSF48619">
    <property type="entry name" value="Phospholipase A2, PLA2"/>
    <property type="match status" value="1"/>
</dbReference>
<dbReference type="PROSITE" id="PS00119">
    <property type="entry name" value="PA2_ASP"/>
    <property type="match status" value="1"/>
</dbReference>
<dbReference type="PROSITE" id="PS00118">
    <property type="entry name" value="PA2_HIS"/>
    <property type="match status" value="1"/>
</dbReference>